<geneLocation type="mitochondrion"/>
<proteinExistence type="inferred from homology"/>
<comment type="function">
    <text evidence="1">Core subunit of the mitochondrial membrane respiratory chain NADH dehydrogenase (Complex I) that is believed to belong to the minimal assembly required for catalysis. Complex I functions in the transfer of electrons from NADH to the respiratory chain. The immediate electron acceptor for the enzyme is believed to be ubiquinone (By similarity).</text>
</comment>
<comment type="catalytic activity">
    <reaction>
        <text>a ubiquinone + NADH + 5 H(+)(in) = a ubiquinol + NAD(+) + 4 H(+)(out)</text>
        <dbReference type="Rhea" id="RHEA:29091"/>
        <dbReference type="Rhea" id="RHEA-COMP:9565"/>
        <dbReference type="Rhea" id="RHEA-COMP:9566"/>
        <dbReference type="ChEBI" id="CHEBI:15378"/>
        <dbReference type="ChEBI" id="CHEBI:16389"/>
        <dbReference type="ChEBI" id="CHEBI:17976"/>
        <dbReference type="ChEBI" id="CHEBI:57540"/>
        <dbReference type="ChEBI" id="CHEBI:57945"/>
        <dbReference type="EC" id="7.1.1.2"/>
    </reaction>
</comment>
<comment type="subcellular location">
    <subcellularLocation>
        <location evidence="1">Mitochondrion inner membrane</location>
        <topology evidence="1">Multi-pass membrane protein</topology>
    </subcellularLocation>
</comment>
<comment type="similarity">
    <text evidence="3">Belongs to the complex I subunit 5 family.</text>
</comment>
<protein>
    <recommendedName>
        <fullName>NADH-ubiquinone oxidoreductase chain 5</fullName>
        <ecNumber>7.1.1.2</ecNumber>
    </recommendedName>
    <alternativeName>
        <fullName>NADH dehydrogenase subunit 5</fullName>
    </alternativeName>
</protein>
<accession>Q9G2W8</accession>
<accession>O63921</accession>
<name>NU5M_MYXGL</name>
<dbReference type="EC" id="7.1.1.2"/>
<dbReference type="EMBL" id="Y15190">
    <property type="protein sequence ID" value="CAA75489.1"/>
    <property type="molecule type" value="Genomic_DNA"/>
</dbReference>
<dbReference type="EMBL" id="AJ404477">
    <property type="protein sequence ID" value="CAC20659.1"/>
    <property type="molecule type" value="Genomic_DNA"/>
</dbReference>
<dbReference type="PIR" id="T13820">
    <property type="entry name" value="T13820"/>
</dbReference>
<dbReference type="RefSeq" id="NP_073283.1">
    <property type="nucleotide sequence ID" value="NC_002639.1"/>
</dbReference>
<dbReference type="SMR" id="Q9G2W8"/>
<dbReference type="GeneID" id="802348"/>
<dbReference type="CTD" id="4540"/>
<dbReference type="GO" id="GO:0005743">
    <property type="term" value="C:mitochondrial inner membrane"/>
    <property type="evidence" value="ECO:0007669"/>
    <property type="project" value="UniProtKB-SubCell"/>
</dbReference>
<dbReference type="GO" id="GO:0008137">
    <property type="term" value="F:NADH dehydrogenase (ubiquinone) activity"/>
    <property type="evidence" value="ECO:0007669"/>
    <property type="project" value="UniProtKB-EC"/>
</dbReference>
<dbReference type="GO" id="GO:0042773">
    <property type="term" value="P:ATP synthesis coupled electron transport"/>
    <property type="evidence" value="ECO:0007669"/>
    <property type="project" value="InterPro"/>
</dbReference>
<dbReference type="GO" id="GO:0015990">
    <property type="term" value="P:electron transport coupled proton transport"/>
    <property type="evidence" value="ECO:0007669"/>
    <property type="project" value="TreeGrafter"/>
</dbReference>
<dbReference type="InterPro" id="IPR010934">
    <property type="entry name" value="NADH_DH_su5_C"/>
</dbReference>
<dbReference type="InterPro" id="IPR001750">
    <property type="entry name" value="ND/Mrp_TM"/>
</dbReference>
<dbReference type="InterPro" id="IPR003945">
    <property type="entry name" value="NU5C-like"/>
</dbReference>
<dbReference type="InterPro" id="IPR001516">
    <property type="entry name" value="Proton_antipo_N"/>
</dbReference>
<dbReference type="PANTHER" id="PTHR42829">
    <property type="entry name" value="NADH-UBIQUINONE OXIDOREDUCTASE CHAIN 5"/>
    <property type="match status" value="1"/>
</dbReference>
<dbReference type="PANTHER" id="PTHR42829:SF2">
    <property type="entry name" value="NADH-UBIQUINONE OXIDOREDUCTASE CHAIN 5"/>
    <property type="match status" value="1"/>
</dbReference>
<dbReference type="Pfam" id="PF06455">
    <property type="entry name" value="NADH5_C"/>
    <property type="match status" value="1"/>
</dbReference>
<dbReference type="Pfam" id="PF00361">
    <property type="entry name" value="Proton_antipo_M"/>
    <property type="match status" value="1"/>
</dbReference>
<dbReference type="Pfam" id="PF00662">
    <property type="entry name" value="Proton_antipo_N"/>
    <property type="match status" value="1"/>
</dbReference>
<dbReference type="PRINTS" id="PR01434">
    <property type="entry name" value="NADHDHGNASE5"/>
</dbReference>
<feature type="chain" id="PRO_0000118117" description="NADH-ubiquinone oxidoreductase chain 5">
    <location>
        <begin position="1"/>
        <end position="601"/>
    </location>
</feature>
<feature type="transmembrane region" description="Helical" evidence="2">
    <location>
        <begin position="5"/>
        <end position="25"/>
    </location>
</feature>
<feature type="transmembrane region" description="Helical" evidence="2">
    <location>
        <begin position="37"/>
        <end position="54"/>
    </location>
</feature>
<feature type="transmembrane region" description="Helical" evidence="2">
    <location>
        <begin position="83"/>
        <end position="105"/>
    </location>
</feature>
<feature type="transmembrane region" description="Helical" evidence="2">
    <location>
        <begin position="112"/>
        <end position="129"/>
    </location>
</feature>
<feature type="transmembrane region" description="Helical" evidence="2">
    <location>
        <begin position="134"/>
        <end position="156"/>
    </location>
</feature>
<feature type="transmembrane region" description="Helical" evidence="2">
    <location>
        <begin position="169"/>
        <end position="189"/>
    </location>
</feature>
<feature type="transmembrane region" description="Helical" evidence="2">
    <location>
        <begin position="209"/>
        <end position="231"/>
    </location>
</feature>
<feature type="transmembrane region" description="Helical" evidence="2">
    <location>
        <begin position="240"/>
        <end position="260"/>
    </location>
</feature>
<feature type="transmembrane region" description="Helical" evidence="2">
    <location>
        <begin position="271"/>
        <end position="291"/>
    </location>
</feature>
<feature type="transmembrane region" description="Helical" evidence="2">
    <location>
        <begin position="300"/>
        <end position="320"/>
    </location>
</feature>
<feature type="transmembrane region" description="Helical" evidence="2">
    <location>
        <begin position="323"/>
        <end position="343"/>
    </location>
</feature>
<feature type="transmembrane region" description="Helical" evidence="2">
    <location>
        <begin position="363"/>
        <end position="383"/>
    </location>
</feature>
<feature type="transmembrane region" description="Helical" evidence="2">
    <location>
        <begin position="400"/>
        <end position="420"/>
    </location>
</feature>
<feature type="transmembrane region" description="Helical" evidence="2">
    <location>
        <begin position="451"/>
        <end position="471"/>
    </location>
</feature>
<feature type="transmembrane region" description="Helical" evidence="2">
    <location>
        <begin position="478"/>
        <end position="498"/>
    </location>
</feature>
<feature type="transmembrane region" description="Helical" evidence="2">
    <location>
        <begin position="508"/>
        <end position="528"/>
    </location>
</feature>
<feature type="transmembrane region" description="Helical" evidence="2">
    <location>
        <begin position="581"/>
        <end position="601"/>
    </location>
</feature>
<feature type="sequence conflict" description="In Ref. 1; CAA75489." evidence="3" ref="1">
    <original>L</original>
    <variation>F</variation>
    <location>
        <position position="47"/>
    </location>
</feature>
<feature type="sequence conflict" description="In Ref. 1; CAA75489." evidence="3" ref="1">
    <original>S</original>
    <variation>N</variation>
    <location>
        <position position="450"/>
    </location>
</feature>
<feature type="sequence conflict" description="In Ref. 1; CAA75489." evidence="3" ref="1">
    <original>T</original>
    <variation>P</variation>
    <location>
        <position position="578"/>
    </location>
</feature>
<gene>
    <name type="primary">MT-ND5</name>
    <name type="synonym">MTND5</name>
    <name type="synonym">NADH5</name>
    <name type="synonym">ND5</name>
</gene>
<sequence length="601" mass="68107">MAYNITSLMTNFCLITTILSLTLSFKQNSDNNKITKYMRNAFIISLLPLIIYIDQQMDSSSSFTSTFNMISFNLLLGFEADMYCLTFFSIALYITWSIMQFSLWYMHEHNNTLFFKYLTMFLISMLFFLSANNLLQLILGWEGMGIMSFLLINWWHNRLEANSAAMQAIIYNRIGDTGLIIFMIWSALFTNSWNMKQIFILQNNSMDLWLPLLGIVLAATGKSAQFMLHPWLLSAMEGPTPVSALLHSSTMVVSGVFLLIRFYPMIKNSQMIISIILCLGAMTTLFAALCASSQTDIKKIIAFSTTSQLGLMTVTIGINQPQLAFLHMSTHAFFKALLFLCSASIIHTINNEQDIRKMGSLHLILPFTSSCTLISSLALMGMPYLSGFYSKDIILETLNMSYVNAWALLSTMLATALTSIYSTRLILLSMAMTPNINTLIFLKKDKNLFSPLIRLTLGSIIFGFIISTFFLPEKQPNFSIPFNSKILPTIMLILVSSLTLYFMNNHKFSHMPPLFFPSMSGYFPAIFHRLFSYYFLLFPKKVSSSLLDILWYETLGPKSISHNLSSSSSLFNKLSQGTINNYITIFVITILSSLLTSALYF</sequence>
<evidence type="ECO:0000250" key="1"/>
<evidence type="ECO:0000255" key="2"/>
<evidence type="ECO:0000305" key="3"/>
<organism>
    <name type="scientific">Myxine glutinosa</name>
    <name type="common">Atlantic hagfish</name>
    <dbReference type="NCBI Taxonomy" id="7769"/>
    <lineage>
        <taxon>Eukaryota</taxon>
        <taxon>Metazoa</taxon>
        <taxon>Chordata</taxon>
        <taxon>Craniata</taxon>
        <taxon>Vertebrata</taxon>
        <taxon>Cyclostomata</taxon>
        <taxon>Myxini</taxon>
        <taxon>Myxiniformes</taxon>
        <taxon>Myxinidae</taxon>
        <taxon>Myxininae</taxon>
        <taxon>Myxine</taxon>
    </lineage>
</organism>
<reference key="1">
    <citation type="journal article" date="1998" name="J. Mol. Evol.">
        <title>The mitochondrial DNA molecule of the hagfish (Myxine glutinosa) and vertebrate phylogeny.</title>
        <authorList>
            <person name="Rasmussen A.S."/>
            <person name="Janke A."/>
            <person name="Arnason U."/>
        </authorList>
    </citation>
    <scope>NUCLEOTIDE SEQUENCE [GENOMIC DNA]</scope>
</reference>
<reference key="2">
    <citation type="journal article" date="2001" name="J. Mol. Evol.">
        <title>The complete mitochondrial genome of the hagfish Myxine glutinosa: unique features of the control region.</title>
        <authorList>
            <person name="Delarbre C."/>
            <person name="Rasmussen A.S."/>
            <person name="Arnason U."/>
            <person name="Gachelin G."/>
        </authorList>
    </citation>
    <scope>NUCLEOTIDE SEQUENCE [GENOMIC DNA]</scope>
</reference>
<keyword id="KW-0249">Electron transport</keyword>
<keyword id="KW-0472">Membrane</keyword>
<keyword id="KW-0496">Mitochondrion</keyword>
<keyword id="KW-0999">Mitochondrion inner membrane</keyword>
<keyword id="KW-0520">NAD</keyword>
<keyword id="KW-0679">Respiratory chain</keyword>
<keyword id="KW-1278">Translocase</keyword>
<keyword id="KW-0812">Transmembrane</keyword>
<keyword id="KW-1133">Transmembrane helix</keyword>
<keyword id="KW-0813">Transport</keyword>
<keyword id="KW-0830">Ubiquinone</keyword>